<sequence>MAIILAIETSCDETAVAIVNNRNVCSNVVSSQIQTHQIFGGVVPEVASRQHLLLINTCLDQALQASGLGWPEIEAIAVTVAPGLAGALMVGVTAAKTLAMVHQKPFLGVHHLEGHIYASYLSQPDLQPPFLCLLVSGGHTSLIHVKGCGDYRQLGTTRDDAAGEAFDKVARLLDLGYPGGPAIDRAAKQGDPGTFKLPEGKISLPQGGYHPYDSSFSGLKTAMLRLTQELKQSSAPLPVDDLAASFQDTVARSLTKKTIQCVLDHGLTTITVGGGVAANSRLRYHLQTAAQEHQLQVFFPPLKFCTDNAAMIACAAADHFQNGDRSPLTLGVQSRLSVEQVSQLYERN</sequence>
<evidence type="ECO:0000255" key="1">
    <source>
        <dbReference type="HAMAP-Rule" id="MF_01445"/>
    </source>
</evidence>
<keyword id="KW-0012">Acyltransferase</keyword>
<keyword id="KW-0963">Cytoplasm</keyword>
<keyword id="KW-0408">Iron</keyword>
<keyword id="KW-0479">Metal-binding</keyword>
<keyword id="KW-1185">Reference proteome</keyword>
<keyword id="KW-0808">Transferase</keyword>
<keyword id="KW-0819">tRNA processing</keyword>
<name>TSAD_SYNY3</name>
<organism>
    <name type="scientific">Synechocystis sp. (strain ATCC 27184 / PCC 6803 / Kazusa)</name>
    <dbReference type="NCBI Taxonomy" id="1111708"/>
    <lineage>
        <taxon>Bacteria</taxon>
        <taxon>Bacillati</taxon>
        <taxon>Cyanobacteriota</taxon>
        <taxon>Cyanophyceae</taxon>
        <taxon>Synechococcales</taxon>
        <taxon>Merismopediaceae</taxon>
        <taxon>Synechocystis</taxon>
    </lineage>
</organism>
<protein>
    <recommendedName>
        <fullName evidence="1">tRNA N6-adenosine threonylcarbamoyltransferase</fullName>
        <ecNumber evidence="1">2.3.1.234</ecNumber>
    </recommendedName>
    <alternativeName>
        <fullName evidence="1">N6-L-threonylcarbamoyladenine synthase</fullName>
        <shortName evidence="1">t(6)A synthase</shortName>
    </alternativeName>
    <alternativeName>
        <fullName evidence="1">t(6)A37 threonylcarbamoyladenosine biosynthesis protein TsaD</fullName>
    </alternativeName>
    <alternativeName>
        <fullName evidence="1">tRNA threonylcarbamoyladenosine biosynthesis protein TsaD</fullName>
    </alternativeName>
</protein>
<dbReference type="EC" id="2.3.1.234" evidence="1"/>
<dbReference type="EMBL" id="BA000022">
    <property type="protein sequence ID" value="BAA18109.1"/>
    <property type="molecule type" value="Genomic_DNA"/>
</dbReference>
<dbReference type="PIR" id="S75548">
    <property type="entry name" value="S75548"/>
</dbReference>
<dbReference type="SMR" id="P74034"/>
<dbReference type="FunCoup" id="P74034">
    <property type="interactions" value="531"/>
</dbReference>
<dbReference type="IntAct" id="P74034">
    <property type="interactions" value="1"/>
</dbReference>
<dbReference type="STRING" id="1148.gene:10498980"/>
<dbReference type="PaxDb" id="1148-1653193"/>
<dbReference type="EnsemblBacteria" id="BAA18109">
    <property type="protein sequence ID" value="BAA18109"/>
    <property type="gene ID" value="BAA18109"/>
</dbReference>
<dbReference type="KEGG" id="syn:slr0807"/>
<dbReference type="eggNOG" id="COG0533">
    <property type="taxonomic scope" value="Bacteria"/>
</dbReference>
<dbReference type="InParanoid" id="P74034"/>
<dbReference type="PhylomeDB" id="P74034"/>
<dbReference type="Proteomes" id="UP000001425">
    <property type="component" value="Chromosome"/>
</dbReference>
<dbReference type="GO" id="GO:0005737">
    <property type="term" value="C:cytoplasm"/>
    <property type="evidence" value="ECO:0007669"/>
    <property type="project" value="UniProtKB-SubCell"/>
</dbReference>
<dbReference type="GO" id="GO:0005506">
    <property type="term" value="F:iron ion binding"/>
    <property type="evidence" value="ECO:0007669"/>
    <property type="project" value="UniProtKB-UniRule"/>
</dbReference>
<dbReference type="GO" id="GO:0061711">
    <property type="term" value="F:N(6)-L-threonylcarbamoyladenine synthase activity"/>
    <property type="evidence" value="ECO:0007669"/>
    <property type="project" value="UniProtKB-EC"/>
</dbReference>
<dbReference type="GO" id="GO:0002949">
    <property type="term" value="P:tRNA threonylcarbamoyladenosine modification"/>
    <property type="evidence" value="ECO:0007669"/>
    <property type="project" value="UniProtKB-UniRule"/>
</dbReference>
<dbReference type="CDD" id="cd24133">
    <property type="entry name" value="ASKHA_NBD_TsaD_bac"/>
    <property type="match status" value="1"/>
</dbReference>
<dbReference type="FunFam" id="3.30.420.40:FF:000040">
    <property type="entry name" value="tRNA N6-adenosine threonylcarbamoyltransferase"/>
    <property type="match status" value="1"/>
</dbReference>
<dbReference type="Gene3D" id="3.30.420.40">
    <property type="match status" value="2"/>
</dbReference>
<dbReference type="HAMAP" id="MF_01445">
    <property type="entry name" value="TsaD"/>
    <property type="match status" value="1"/>
</dbReference>
<dbReference type="InterPro" id="IPR043129">
    <property type="entry name" value="ATPase_NBD"/>
</dbReference>
<dbReference type="InterPro" id="IPR000905">
    <property type="entry name" value="Gcp-like_dom"/>
</dbReference>
<dbReference type="InterPro" id="IPR017861">
    <property type="entry name" value="KAE1/TsaD"/>
</dbReference>
<dbReference type="InterPro" id="IPR017860">
    <property type="entry name" value="Peptidase_M22_CS"/>
</dbReference>
<dbReference type="InterPro" id="IPR022450">
    <property type="entry name" value="TsaD"/>
</dbReference>
<dbReference type="NCBIfam" id="TIGR00329">
    <property type="entry name" value="gcp_kae1"/>
    <property type="match status" value="1"/>
</dbReference>
<dbReference type="NCBIfam" id="TIGR03723">
    <property type="entry name" value="T6A_TsaD_YgjD"/>
    <property type="match status" value="1"/>
</dbReference>
<dbReference type="PANTHER" id="PTHR11735">
    <property type="entry name" value="TRNA N6-ADENOSINE THREONYLCARBAMOYLTRANSFERASE"/>
    <property type="match status" value="1"/>
</dbReference>
<dbReference type="PANTHER" id="PTHR11735:SF6">
    <property type="entry name" value="TRNA N6-ADENOSINE THREONYLCARBAMOYLTRANSFERASE, MITOCHONDRIAL"/>
    <property type="match status" value="1"/>
</dbReference>
<dbReference type="Pfam" id="PF00814">
    <property type="entry name" value="TsaD"/>
    <property type="match status" value="1"/>
</dbReference>
<dbReference type="PRINTS" id="PR00789">
    <property type="entry name" value="OSIALOPTASE"/>
</dbReference>
<dbReference type="SUPFAM" id="SSF53067">
    <property type="entry name" value="Actin-like ATPase domain"/>
    <property type="match status" value="2"/>
</dbReference>
<dbReference type="PROSITE" id="PS01016">
    <property type="entry name" value="GLYCOPROTEASE"/>
    <property type="match status" value="1"/>
</dbReference>
<feature type="chain" id="PRO_0000096974" description="tRNA N6-adenosine threonylcarbamoyltransferase">
    <location>
        <begin position="1"/>
        <end position="348"/>
    </location>
</feature>
<feature type="binding site" evidence="1">
    <location>
        <position position="111"/>
    </location>
    <ligand>
        <name>Fe cation</name>
        <dbReference type="ChEBI" id="CHEBI:24875"/>
    </ligand>
</feature>
<feature type="binding site" evidence="1">
    <location>
        <position position="115"/>
    </location>
    <ligand>
        <name>Fe cation</name>
        <dbReference type="ChEBI" id="CHEBI:24875"/>
    </ligand>
</feature>
<feature type="binding site" evidence="1">
    <location>
        <begin position="134"/>
        <end position="138"/>
    </location>
    <ligand>
        <name>substrate</name>
    </ligand>
</feature>
<feature type="binding site" evidence="1">
    <location>
        <position position="167"/>
    </location>
    <ligand>
        <name>substrate</name>
    </ligand>
</feature>
<feature type="binding site" evidence="1">
    <location>
        <position position="180"/>
    </location>
    <ligand>
        <name>substrate</name>
    </ligand>
</feature>
<feature type="binding site" evidence="1">
    <location>
        <position position="184"/>
    </location>
    <ligand>
        <name>substrate</name>
    </ligand>
</feature>
<feature type="binding site" evidence="1">
    <location>
        <position position="279"/>
    </location>
    <ligand>
        <name>substrate</name>
    </ligand>
</feature>
<feature type="binding site" evidence="1">
    <location>
        <position position="307"/>
    </location>
    <ligand>
        <name>Fe cation</name>
        <dbReference type="ChEBI" id="CHEBI:24875"/>
    </ligand>
</feature>
<proteinExistence type="inferred from homology"/>
<comment type="function">
    <text evidence="1">Required for the formation of a threonylcarbamoyl group on adenosine at position 37 (t(6)A37) in tRNAs that read codons beginning with adenine. Is involved in the transfer of the threonylcarbamoyl moiety of threonylcarbamoyl-AMP (TC-AMP) to the N6 group of A37, together with TsaE and TsaB. TsaD likely plays a direct catalytic role in this reaction.</text>
</comment>
<comment type="catalytic activity">
    <reaction evidence="1">
        <text>L-threonylcarbamoyladenylate + adenosine(37) in tRNA = N(6)-L-threonylcarbamoyladenosine(37) in tRNA + AMP + H(+)</text>
        <dbReference type="Rhea" id="RHEA:37059"/>
        <dbReference type="Rhea" id="RHEA-COMP:10162"/>
        <dbReference type="Rhea" id="RHEA-COMP:10163"/>
        <dbReference type="ChEBI" id="CHEBI:15378"/>
        <dbReference type="ChEBI" id="CHEBI:73682"/>
        <dbReference type="ChEBI" id="CHEBI:74411"/>
        <dbReference type="ChEBI" id="CHEBI:74418"/>
        <dbReference type="ChEBI" id="CHEBI:456215"/>
        <dbReference type="EC" id="2.3.1.234"/>
    </reaction>
</comment>
<comment type="cofactor">
    <cofactor evidence="1">
        <name>Fe(2+)</name>
        <dbReference type="ChEBI" id="CHEBI:29033"/>
    </cofactor>
    <text evidence="1">Binds 1 Fe(2+) ion per subunit.</text>
</comment>
<comment type="subcellular location">
    <subcellularLocation>
        <location evidence="1">Cytoplasm</location>
    </subcellularLocation>
</comment>
<comment type="similarity">
    <text evidence="1">Belongs to the KAE1 / TsaD family.</text>
</comment>
<gene>
    <name evidence="1" type="primary">tsaD</name>
    <name type="synonym">gcp</name>
    <name type="ordered locus">slr0807</name>
</gene>
<reference key="1">
    <citation type="journal article" date="1996" name="DNA Res.">
        <title>Sequence analysis of the genome of the unicellular cyanobacterium Synechocystis sp. strain PCC6803. II. Sequence determination of the entire genome and assignment of potential protein-coding regions.</title>
        <authorList>
            <person name="Kaneko T."/>
            <person name="Sato S."/>
            <person name="Kotani H."/>
            <person name="Tanaka A."/>
            <person name="Asamizu E."/>
            <person name="Nakamura Y."/>
            <person name="Miyajima N."/>
            <person name="Hirosawa M."/>
            <person name="Sugiura M."/>
            <person name="Sasamoto S."/>
            <person name="Kimura T."/>
            <person name="Hosouchi T."/>
            <person name="Matsuno A."/>
            <person name="Muraki A."/>
            <person name="Nakazaki N."/>
            <person name="Naruo K."/>
            <person name="Okumura S."/>
            <person name="Shimpo S."/>
            <person name="Takeuchi C."/>
            <person name="Wada T."/>
            <person name="Watanabe A."/>
            <person name="Yamada M."/>
            <person name="Yasuda M."/>
            <person name="Tabata S."/>
        </authorList>
    </citation>
    <scope>NUCLEOTIDE SEQUENCE [LARGE SCALE GENOMIC DNA]</scope>
    <source>
        <strain>ATCC 27184 / PCC 6803 / Kazusa</strain>
    </source>
</reference>
<accession>P74034</accession>